<comment type="catalytic activity">
    <reaction evidence="4">
        <text>4-imidazolone-5-propanoate = trans-urocanate + H2O</text>
        <dbReference type="Rhea" id="RHEA:13101"/>
        <dbReference type="ChEBI" id="CHEBI:15377"/>
        <dbReference type="ChEBI" id="CHEBI:17771"/>
        <dbReference type="ChEBI" id="CHEBI:77893"/>
        <dbReference type="EC" id="4.2.1.49"/>
    </reaction>
</comment>
<comment type="cofactor">
    <cofactor evidence="1">
        <name>NAD(+)</name>
        <dbReference type="ChEBI" id="CHEBI:57540"/>
    </cofactor>
</comment>
<comment type="pathway">
    <text>Amino-acid degradation; L-histidine degradation into L-glutamate; N-formimidoyl-L-glutamate from L-histidine: step 2/3.</text>
</comment>
<comment type="interaction">
    <interactant intactId="EBI-13073486">
        <id>Q96N76</id>
    </interactant>
    <interactant intactId="EBI-750671">
        <id>Q15699</id>
        <label>ALX1</label>
    </interactant>
    <organismsDiffer>false</organismsDiffer>
    <experiments>3</experiments>
</comment>
<comment type="alternative products">
    <event type="alternative splicing"/>
    <isoform>
        <id>Q96N76-1</id>
        <name>1</name>
        <sequence type="displayed"/>
    </isoform>
    <isoform>
        <id>Q96N76-2</id>
        <name>2</name>
        <sequence type="described" ref="VSP_045422"/>
    </isoform>
</comment>
<comment type="disease" evidence="4">
    <disease id="DI-02405">
        <name>Urocanase deficiency</name>
        <acronym>UROCD</acronym>
        <description>An inborn error of histidine metabolism resulting in urocanic aciduria and neurological manifestations including intellectual disability, ataxia, episodic aggressive behavior or exaggerated affection-seeking.</description>
        <dbReference type="MIM" id="276880"/>
    </disease>
    <text>The disease is caused by variants affecting the gene represented in this entry.</text>
</comment>
<comment type="similarity">
    <text evidence="6">Belongs to the urocanase family.</text>
</comment>
<comment type="sequence caution" evidence="6">
    <conflict type="erroneous initiation">
        <sequence resource="EMBL-CDS" id="BAD38651"/>
    </conflict>
    <text>Extended N-terminus.</text>
</comment>
<reference key="1">
    <citation type="journal article" date="2004" name="Oncogene">
        <title>Expression profiling and differential screening between hepatoblastomas and the corresponding normal livers: identification of high expression of the PLK1 oncogene as a poor-prognostic indicator of hepatoblastomas.</title>
        <authorList>
            <person name="Yamada S."/>
            <person name="Ohira M."/>
            <person name="Horie H."/>
            <person name="Ando K."/>
            <person name="Takayasu H."/>
            <person name="Suzuki Y."/>
            <person name="Sugano S."/>
            <person name="Hirata T."/>
            <person name="Goto T."/>
            <person name="Matsunaga T."/>
            <person name="Hiyama E."/>
            <person name="Hayashi Y."/>
            <person name="Ando H."/>
            <person name="Suita S."/>
            <person name="Kaneko M."/>
            <person name="Sasaki F."/>
            <person name="Hashizume K."/>
            <person name="Ohnuma N."/>
            <person name="Nakagawara A."/>
        </authorList>
    </citation>
    <scope>NUCLEOTIDE SEQUENCE [MRNA] (ISOFORM 2)</scope>
</reference>
<reference key="2">
    <citation type="journal article" date="2004" name="Nat. Genet.">
        <title>Complete sequencing and characterization of 21,243 full-length human cDNAs.</title>
        <authorList>
            <person name="Ota T."/>
            <person name="Suzuki Y."/>
            <person name="Nishikawa T."/>
            <person name="Otsuki T."/>
            <person name="Sugiyama T."/>
            <person name="Irie R."/>
            <person name="Wakamatsu A."/>
            <person name="Hayashi K."/>
            <person name="Sato H."/>
            <person name="Nagai K."/>
            <person name="Kimura K."/>
            <person name="Makita H."/>
            <person name="Sekine M."/>
            <person name="Obayashi M."/>
            <person name="Nishi T."/>
            <person name="Shibahara T."/>
            <person name="Tanaka T."/>
            <person name="Ishii S."/>
            <person name="Yamamoto J."/>
            <person name="Saito K."/>
            <person name="Kawai Y."/>
            <person name="Isono Y."/>
            <person name="Nakamura Y."/>
            <person name="Nagahari K."/>
            <person name="Murakami K."/>
            <person name="Yasuda T."/>
            <person name="Iwayanagi T."/>
            <person name="Wagatsuma M."/>
            <person name="Shiratori A."/>
            <person name="Sudo H."/>
            <person name="Hosoiri T."/>
            <person name="Kaku Y."/>
            <person name="Kodaira H."/>
            <person name="Kondo H."/>
            <person name="Sugawara M."/>
            <person name="Takahashi M."/>
            <person name="Kanda K."/>
            <person name="Yokoi T."/>
            <person name="Furuya T."/>
            <person name="Kikkawa E."/>
            <person name="Omura Y."/>
            <person name="Abe K."/>
            <person name="Kamihara K."/>
            <person name="Katsuta N."/>
            <person name="Sato K."/>
            <person name="Tanikawa M."/>
            <person name="Yamazaki M."/>
            <person name="Ninomiya K."/>
            <person name="Ishibashi T."/>
            <person name="Yamashita H."/>
            <person name="Murakawa K."/>
            <person name="Fujimori K."/>
            <person name="Tanai H."/>
            <person name="Kimata M."/>
            <person name="Watanabe M."/>
            <person name="Hiraoka S."/>
            <person name="Chiba Y."/>
            <person name="Ishida S."/>
            <person name="Ono Y."/>
            <person name="Takiguchi S."/>
            <person name="Watanabe S."/>
            <person name="Yosida M."/>
            <person name="Hotuta T."/>
            <person name="Kusano J."/>
            <person name="Kanehori K."/>
            <person name="Takahashi-Fujii A."/>
            <person name="Hara H."/>
            <person name="Tanase T.-O."/>
            <person name="Nomura Y."/>
            <person name="Togiya S."/>
            <person name="Komai F."/>
            <person name="Hara R."/>
            <person name="Takeuchi K."/>
            <person name="Arita M."/>
            <person name="Imose N."/>
            <person name="Musashino K."/>
            <person name="Yuuki H."/>
            <person name="Oshima A."/>
            <person name="Sasaki N."/>
            <person name="Aotsuka S."/>
            <person name="Yoshikawa Y."/>
            <person name="Matsunawa H."/>
            <person name="Ichihara T."/>
            <person name="Shiohata N."/>
            <person name="Sano S."/>
            <person name="Moriya S."/>
            <person name="Momiyama H."/>
            <person name="Satoh N."/>
            <person name="Takami S."/>
            <person name="Terashima Y."/>
            <person name="Suzuki O."/>
            <person name="Nakagawa S."/>
            <person name="Senoh A."/>
            <person name="Mizoguchi H."/>
            <person name="Goto Y."/>
            <person name="Shimizu F."/>
            <person name="Wakebe H."/>
            <person name="Hishigaki H."/>
            <person name="Watanabe T."/>
            <person name="Sugiyama A."/>
            <person name="Takemoto M."/>
            <person name="Kawakami B."/>
            <person name="Yamazaki M."/>
            <person name="Watanabe K."/>
            <person name="Kumagai A."/>
            <person name="Itakura S."/>
            <person name="Fukuzumi Y."/>
            <person name="Fujimori Y."/>
            <person name="Komiyama M."/>
            <person name="Tashiro H."/>
            <person name="Tanigami A."/>
            <person name="Fujiwara T."/>
            <person name="Ono T."/>
            <person name="Yamada K."/>
            <person name="Fujii Y."/>
            <person name="Ozaki K."/>
            <person name="Hirao M."/>
            <person name="Ohmori Y."/>
            <person name="Kawabata A."/>
            <person name="Hikiji T."/>
            <person name="Kobatake N."/>
            <person name="Inagaki H."/>
            <person name="Ikema Y."/>
            <person name="Okamoto S."/>
            <person name="Okitani R."/>
            <person name="Kawakami T."/>
            <person name="Noguchi S."/>
            <person name="Itoh T."/>
            <person name="Shigeta K."/>
            <person name="Senba T."/>
            <person name="Matsumura K."/>
            <person name="Nakajima Y."/>
            <person name="Mizuno T."/>
            <person name="Morinaga M."/>
            <person name="Sasaki M."/>
            <person name="Togashi T."/>
            <person name="Oyama M."/>
            <person name="Hata H."/>
            <person name="Watanabe M."/>
            <person name="Komatsu T."/>
            <person name="Mizushima-Sugano J."/>
            <person name="Satoh T."/>
            <person name="Shirai Y."/>
            <person name="Takahashi Y."/>
            <person name="Nakagawa K."/>
            <person name="Okumura K."/>
            <person name="Nagase T."/>
            <person name="Nomura N."/>
            <person name="Kikuchi H."/>
            <person name="Masuho Y."/>
            <person name="Yamashita R."/>
            <person name="Nakai K."/>
            <person name="Yada T."/>
            <person name="Nakamura Y."/>
            <person name="Ohara O."/>
            <person name="Isogai T."/>
            <person name="Sugano S."/>
        </authorList>
    </citation>
    <scope>NUCLEOTIDE SEQUENCE [LARGE SCALE MRNA] (ISOFORM 1)</scope>
    <source>
        <tissue>Liver</tissue>
    </source>
</reference>
<reference key="3">
    <citation type="journal article" date="2006" name="Nature">
        <title>The DNA sequence, annotation and analysis of human chromosome 3.</title>
        <authorList>
            <person name="Muzny D.M."/>
            <person name="Scherer S.E."/>
            <person name="Kaul R."/>
            <person name="Wang J."/>
            <person name="Yu J."/>
            <person name="Sudbrak R."/>
            <person name="Buhay C.J."/>
            <person name="Chen R."/>
            <person name="Cree A."/>
            <person name="Ding Y."/>
            <person name="Dugan-Rocha S."/>
            <person name="Gill R."/>
            <person name="Gunaratne P."/>
            <person name="Harris R.A."/>
            <person name="Hawes A.C."/>
            <person name="Hernandez J."/>
            <person name="Hodgson A.V."/>
            <person name="Hume J."/>
            <person name="Jackson A."/>
            <person name="Khan Z.M."/>
            <person name="Kovar-Smith C."/>
            <person name="Lewis L.R."/>
            <person name="Lozado R.J."/>
            <person name="Metzker M.L."/>
            <person name="Milosavljevic A."/>
            <person name="Miner G.R."/>
            <person name="Morgan M.B."/>
            <person name="Nazareth L.V."/>
            <person name="Scott G."/>
            <person name="Sodergren E."/>
            <person name="Song X.-Z."/>
            <person name="Steffen D."/>
            <person name="Wei S."/>
            <person name="Wheeler D.A."/>
            <person name="Wright M.W."/>
            <person name="Worley K.C."/>
            <person name="Yuan Y."/>
            <person name="Zhang Z."/>
            <person name="Adams C.Q."/>
            <person name="Ansari-Lari M.A."/>
            <person name="Ayele M."/>
            <person name="Brown M.J."/>
            <person name="Chen G."/>
            <person name="Chen Z."/>
            <person name="Clendenning J."/>
            <person name="Clerc-Blankenburg K.P."/>
            <person name="Chen R."/>
            <person name="Chen Z."/>
            <person name="Davis C."/>
            <person name="Delgado O."/>
            <person name="Dinh H.H."/>
            <person name="Dong W."/>
            <person name="Draper H."/>
            <person name="Ernst S."/>
            <person name="Fu G."/>
            <person name="Gonzalez-Garay M.L."/>
            <person name="Garcia D.K."/>
            <person name="Gillett W."/>
            <person name="Gu J."/>
            <person name="Hao B."/>
            <person name="Haugen E."/>
            <person name="Havlak P."/>
            <person name="He X."/>
            <person name="Hennig S."/>
            <person name="Hu S."/>
            <person name="Huang W."/>
            <person name="Jackson L.R."/>
            <person name="Jacob L.S."/>
            <person name="Kelly S.H."/>
            <person name="Kube M."/>
            <person name="Levy R."/>
            <person name="Li Z."/>
            <person name="Liu B."/>
            <person name="Liu J."/>
            <person name="Liu W."/>
            <person name="Lu J."/>
            <person name="Maheshwari M."/>
            <person name="Nguyen B.-V."/>
            <person name="Okwuonu G.O."/>
            <person name="Palmeiri A."/>
            <person name="Pasternak S."/>
            <person name="Perez L.M."/>
            <person name="Phelps K.A."/>
            <person name="Plopper F.J."/>
            <person name="Qiang B."/>
            <person name="Raymond C."/>
            <person name="Rodriguez R."/>
            <person name="Saenphimmachak C."/>
            <person name="Santibanez J."/>
            <person name="Shen H."/>
            <person name="Shen Y."/>
            <person name="Subramanian S."/>
            <person name="Tabor P.E."/>
            <person name="Verduzco D."/>
            <person name="Waldron L."/>
            <person name="Wang J."/>
            <person name="Wang J."/>
            <person name="Wang Q."/>
            <person name="Williams G.A."/>
            <person name="Wong G.K.-S."/>
            <person name="Yao Z."/>
            <person name="Zhang J."/>
            <person name="Zhang X."/>
            <person name="Zhao G."/>
            <person name="Zhou J."/>
            <person name="Zhou Y."/>
            <person name="Nelson D."/>
            <person name="Lehrach H."/>
            <person name="Reinhardt R."/>
            <person name="Naylor S.L."/>
            <person name="Yang H."/>
            <person name="Olson M."/>
            <person name="Weinstock G."/>
            <person name="Gibbs R.A."/>
        </authorList>
    </citation>
    <scope>NUCLEOTIDE SEQUENCE [LARGE SCALE GENOMIC DNA]</scope>
</reference>
<reference key="4">
    <citation type="journal article" date="2004" name="Genome Res.">
        <title>The status, quality, and expansion of the NIH full-length cDNA project: the Mammalian Gene Collection (MGC).</title>
        <authorList>
            <consortium name="The MGC Project Team"/>
        </authorList>
    </citation>
    <scope>NUCLEOTIDE SEQUENCE [LARGE SCALE MRNA] (ISOFORM 1)</scope>
</reference>
<reference key="5">
    <citation type="journal article" date="2009" name="J. Med. Genet.">
        <title>Mutations in the urocanase gene UROC1 are associated with urocanic aciduria.</title>
        <authorList>
            <person name="Espinos C."/>
            <person name="Pineda M."/>
            <person name="Martinez-Rubio D."/>
            <person name="Lupo V."/>
            <person name="Ormazabal A."/>
            <person name="Vilaseca M.A."/>
            <person name="Spaapen L.J.M."/>
            <person name="Palau F."/>
            <person name="Artuch R."/>
        </authorList>
    </citation>
    <scope>CATALYTIC ACTIVITY</scope>
    <scope>VARIANTS UROCD PRO-70 AND CYS-450</scope>
</reference>
<reference key="6">
    <citation type="journal article" date="2014" name="J. Proteomics">
        <title>An enzyme assisted RP-RPLC approach for in-depth analysis of human liver phosphoproteome.</title>
        <authorList>
            <person name="Bian Y."/>
            <person name="Song C."/>
            <person name="Cheng K."/>
            <person name="Dong M."/>
            <person name="Wang F."/>
            <person name="Huang J."/>
            <person name="Sun D."/>
            <person name="Wang L."/>
            <person name="Ye M."/>
            <person name="Zou H."/>
        </authorList>
    </citation>
    <scope>IDENTIFICATION BY MASS SPECTROMETRY [LARGE SCALE ANALYSIS]</scope>
    <source>
        <tissue>Liver</tissue>
    </source>
</reference>
<gene>
    <name type="primary">UROC1</name>
</gene>
<feature type="chain" id="PRO_0000207374" description="Urocanate hydratase">
    <location>
        <begin position="1"/>
        <end position="676"/>
    </location>
</feature>
<feature type="region of interest" description="Disordered" evidence="3">
    <location>
        <begin position="15"/>
        <end position="35"/>
    </location>
</feature>
<feature type="binding site" evidence="2">
    <location>
        <begin position="126"/>
        <end position="127"/>
    </location>
    <ligand>
        <name>NAD(+)</name>
        <dbReference type="ChEBI" id="CHEBI:57540"/>
    </ligand>
</feature>
<feature type="binding site" evidence="2">
    <location>
        <position position="204"/>
    </location>
    <ligand>
        <name>NAD(+)</name>
        <dbReference type="ChEBI" id="CHEBI:57540"/>
    </ligand>
</feature>
<feature type="binding site" evidence="2">
    <location>
        <begin position="251"/>
        <end position="253"/>
    </location>
    <ligand>
        <name>NAD(+)</name>
        <dbReference type="ChEBI" id="CHEBI:57540"/>
    </ligand>
</feature>
<feature type="binding site" evidence="2">
    <location>
        <position position="271"/>
    </location>
    <ligand>
        <name>NAD(+)</name>
        <dbReference type="ChEBI" id="CHEBI:57540"/>
    </ligand>
</feature>
<feature type="binding site" evidence="2">
    <location>
        <begin position="317"/>
        <end position="318"/>
    </location>
    <ligand>
        <name>NAD(+)</name>
        <dbReference type="ChEBI" id="CHEBI:57540"/>
    </ligand>
</feature>
<feature type="binding site" evidence="2">
    <location>
        <begin position="343"/>
        <end position="347"/>
    </location>
    <ligand>
        <name>NAD(+)</name>
        <dbReference type="ChEBI" id="CHEBI:57540"/>
    </ligand>
</feature>
<feature type="binding site" evidence="2">
    <location>
        <begin position="354"/>
        <end position="355"/>
    </location>
    <ligand>
        <name>NAD(+)</name>
        <dbReference type="ChEBI" id="CHEBI:57540"/>
    </ligand>
</feature>
<feature type="binding site" evidence="2">
    <location>
        <position position="403"/>
    </location>
    <ligand>
        <name>NAD(+)</name>
        <dbReference type="ChEBI" id="CHEBI:57540"/>
    </ligand>
</feature>
<feature type="binding site" evidence="2">
    <location>
        <position position="594"/>
    </location>
    <ligand>
        <name>NAD(+)</name>
        <dbReference type="ChEBI" id="CHEBI:57540"/>
    </ligand>
</feature>
<feature type="splice variant" id="VSP_045422" description="In isoform 2." evidence="5">
    <original>L</original>
    <variation>LRVLQLGLQQALGWAGLPAALGLCVLSCFVNLAPLGEGRCLAPSGFSRPLLGAPVLLLCPS</variation>
    <location>
        <position position="300"/>
    </location>
</feature>
<feature type="sequence variant" id="VAR_062649" description="In UROCD; dbSNP:rs137852796." evidence="4">
    <original>L</original>
    <variation>P</variation>
    <location>
        <position position="70"/>
    </location>
</feature>
<feature type="sequence variant" id="VAR_034000" description="In dbSNP:rs34488036.">
    <original>R</original>
    <variation>W</variation>
    <location>
        <position position="188"/>
    </location>
</feature>
<feature type="sequence variant" id="VAR_034001" description="In dbSNP:rs35062810.">
    <original>S</original>
    <variation>T</variation>
    <location>
        <position position="311"/>
    </location>
</feature>
<feature type="sequence variant" id="VAR_042732" description="In dbSNP:rs9871671.">
    <original>R</original>
    <variation>C</variation>
    <location>
        <position position="429"/>
    </location>
</feature>
<feature type="sequence variant" id="VAR_060221" description="In UROCD; loss of activity; dbSNP:rs137852795." evidence="4">
    <original>R</original>
    <variation>C</variation>
    <location>
        <position position="450"/>
    </location>
</feature>
<accession>Q96N76</accession>
<accession>E9PE13</accession>
<accession>Q14C64</accession>
<accession>Q68CJ7</accession>
<organism>
    <name type="scientific">Homo sapiens</name>
    <name type="common">Human</name>
    <dbReference type="NCBI Taxonomy" id="9606"/>
    <lineage>
        <taxon>Eukaryota</taxon>
        <taxon>Metazoa</taxon>
        <taxon>Chordata</taxon>
        <taxon>Craniata</taxon>
        <taxon>Vertebrata</taxon>
        <taxon>Euteleostomi</taxon>
        <taxon>Mammalia</taxon>
        <taxon>Eutheria</taxon>
        <taxon>Euarchontoglires</taxon>
        <taxon>Primates</taxon>
        <taxon>Haplorrhini</taxon>
        <taxon>Catarrhini</taxon>
        <taxon>Hominidae</taxon>
        <taxon>Homo</taxon>
    </lineage>
</organism>
<protein>
    <recommendedName>
        <fullName>Urocanate hydratase</fullName>
        <shortName>Urocanase</shortName>
        <ecNumber>4.2.1.49</ecNumber>
    </recommendedName>
    <alternativeName>
        <fullName>Imidazolonepropionate hydrolase</fullName>
    </alternativeName>
</protein>
<name>HUTU_HUMAN</name>
<sequence>MSSLQALCSGLPLRPLPENRGRQAGVPHAPVRTPSLSPVEKQLALRNALRYFPPDVQELLAPEFAQELQLYGHIYMYRFCPDIEMRAYPIEQYPCQTKVAAAIMHMIMNNLDPAVAQFPQELVTYGGNGQVFSNWAQFWLTMFYLSKMTEEQTLVMYSGHPLGLFPSSRSAPRLVITNGMVIPNYSSRTEYEKLFALGVTMYGQMTAGSYCYIGPQGIVHGTVLTVLNAARRYLGIEDLAGKVFVTSGLGGMSGAQAKAAVIVGCIGVIAEVDKAALEKRHRQGWLMEVTDSLDRCIQRLREARKKKEVLSLGYHGNVVALWERLVHELDTTGECLVDLGSDQTSCHNPFNGGYYPVQLSFTEAQSLMASNPAVFKDLVQESLRRQVSAINRLAEEKFFFWDYGNAFLLEAQRAGADVEKKGAGRTEFRYPSYVQHIMGDIFSQGFGPFRWVCTSGDPQDLAVTDELATSVLEEAIADGVKVSVKLQYMDNIRWIREAARHRLVVGSQARILYSDQKGRVAIAVAINQAIACRRIKAPVVLSRDHHDVSGTDSPFRETSNIYDGSAFCADMAVQNFVGDACRGATWVALHNGGGVGWGEVINGGFGLVLDGTPEAEGRARLMLSWDVSNGVARRCWSGNQKAYEIICQTMQENSTLVVTLPHKVEDERVLQQALQL</sequence>
<proteinExistence type="evidence at protein level"/>
<evidence type="ECO:0000250" key="1"/>
<evidence type="ECO:0000250" key="2">
    <source>
        <dbReference type="UniProtKB" id="P25503"/>
    </source>
</evidence>
<evidence type="ECO:0000256" key="3">
    <source>
        <dbReference type="SAM" id="MobiDB-lite"/>
    </source>
</evidence>
<evidence type="ECO:0000269" key="4">
    <source>
    </source>
</evidence>
<evidence type="ECO:0000303" key="5">
    <source>
    </source>
</evidence>
<evidence type="ECO:0000305" key="6"/>
<dbReference type="EC" id="4.2.1.49"/>
<dbReference type="EMBL" id="AB075869">
    <property type="protein sequence ID" value="BAD38651.1"/>
    <property type="status" value="ALT_INIT"/>
    <property type="molecule type" value="mRNA"/>
</dbReference>
<dbReference type="EMBL" id="AK055862">
    <property type="protein sequence ID" value="BAB71032.1"/>
    <property type="molecule type" value="mRNA"/>
</dbReference>
<dbReference type="EMBL" id="AC024558">
    <property type="status" value="NOT_ANNOTATED_CDS"/>
    <property type="molecule type" value="Genomic_DNA"/>
</dbReference>
<dbReference type="EMBL" id="BC115405">
    <property type="protein sequence ID" value="AAI15406.1"/>
    <property type="molecule type" value="mRNA"/>
</dbReference>
<dbReference type="EMBL" id="BC115406">
    <property type="protein sequence ID" value="AAI15407.1"/>
    <property type="molecule type" value="mRNA"/>
</dbReference>
<dbReference type="CCDS" id="CCDS3038.1">
    <molecule id="Q96N76-1"/>
</dbReference>
<dbReference type="CCDS" id="CCDS54636.1">
    <molecule id="Q96N76-2"/>
</dbReference>
<dbReference type="RefSeq" id="NP_001159446.1">
    <molecule id="Q96N76-2"/>
    <property type="nucleotide sequence ID" value="NM_001165974.2"/>
</dbReference>
<dbReference type="RefSeq" id="NP_653240.1">
    <molecule id="Q96N76-1"/>
    <property type="nucleotide sequence ID" value="NM_144639.3"/>
</dbReference>
<dbReference type="SMR" id="Q96N76"/>
<dbReference type="BioGRID" id="126291">
    <property type="interactions" value="1"/>
</dbReference>
<dbReference type="FunCoup" id="Q96N76">
    <property type="interactions" value="101"/>
</dbReference>
<dbReference type="IntAct" id="Q96N76">
    <property type="interactions" value="2"/>
</dbReference>
<dbReference type="STRING" id="9606.ENSP00000373073"/>
<dbReference type="GlyGen" id="Q96N76">
    <property type="glycosylation" value="2 sites, 1 O-linked glycan (2 sites)"/>
</dbReference>
<dbReference type="iPTMnet" id="Q96N76"/>
<dbReference type="PhosphoSitePlus" id="Q96N76"/>
<dbReference type="BioMuta" id="UROC1"/>
<dbReference type="DMDM" id="22256789"/>
<dbReference type="MassIVE" id="Q96N76"/>
<dbReference type="PaxDb" id="9606-ENSP00000373073"/>
<dbReference type="PeptideAtlas" id="Q96N76"/>
<dbReference type="ProteomicsDB" id="19788"/>
<dbReference type="ProteomicsDB" id="77480">
    <molecule id="Q96N76-1"/>
</dbReference>
<dbReference type="Antibodypedia" id="52455">
    <property type="antibodies" value="71 antibodies from 16 providers"/>
</dbReference>
<dbReference type="DNASU" id="131669"/>
<dbReference type="Ensembl" id="ENST00000290868.7">
    <molecule id="Q96N76-1"/>
    <property type="protein sequence ID" value="ENSP00000290868.2"/>
    <property type="gene ID" value="ENSG00000159650.9"/>
</dbReference>
<dbReference type="Ensembl" id="ENST00000383579.3">
    <molecule id="Q96N76-2"/>
    <property type="protein sequence ID" value="ENSP00000373073.3"/>
    <property type="gene ID" value="ENSG00000159650.9"/>
</dbReference>
<dbReference type="GeneID" id="131669"/>
<dbReference type="KEGG" id="hsa:131669"/>
<dbReference type="MANE-Select" id="ENST00000290868.7">
    <property type="protein sequence ID" value="ENSP00000290868.2"/>
    <property type="RefSeq nucleotide sequence ID" value="NM_144639.3"/>
    <property type="RefSeq protein sequence ID" value="NP_653240.1"/>
</dbReference>
<dbReference type="UCSC" id="uc003eiz.3">
    <molecule id="Q96N76-1"/>
    <property type="organism name" value="human"/>
</dbReference>
<dbReference type="AGR" id="HGNC:26444"/>
<dbReference type="CTD" id="131669"/>
<dbReference type="DisGeNET" id="131669"/>
<dbReference type="GeneCards" id="UROC1"/>
<dbReference type="HGNC" id="HGNC:26444">
    <property type="gene designation" value="UROC1"/>
</dbReference>
<dbReference type="HPA" id="ENSG00000159650">
    <property type="expression patterns" value="Tissue enriched (liver)"/>
</dbReference>
<dbReference type="MalaCards" id="UROC1"/>
<dbReference type="MIM" id="276880">
    <property type="type" value="phenotype"/>
</dbReference>
<dbReference type="MIM" id="613012">
    <property type="type" value="gene"/>
</dbReference>
<dbReference type="neXtProt" id="NX_Q96N76"/>
<dbReference type="OpenTargets" id="ENSG00000159650"/>
<dbReference type="Orphanet" id="210128">
    <property type="disease" value="Urocanic aciduria"/>
</dbReference>
<dbReference type="PharmGKB" id="PA134879207"/>
<dbReference type="VEuPathDB" id="HostDB:ENSG00000159650"/>
<dbReference type="eggNOG" id="ENOG502QR75">
    <property type="taxonomic scope" value="Eukaryota"/>
</dbReference>
<dbReference type="GeneTree" id="ENSGT00390000015136"/>
<dbReference type="HOGENOM" id="CLU_018868_3_0_1"/>
<dbReference type="InParanoid" id="Q96N76"/>
<dbReference type="OMA" id="VHFQGLP"/>
<dbReference type="OrthoDB" id="194468at2759"/>
<dbReference type="PAN-GO" id="Q96N76">
    <property type="GO annotations" value="2 GO annotations based on evolutionary models"/>
</dbReference>
<dbReference type="PhylomeDB" id="Q96N76"/>
<dbReference type="TreeFam" id="TF314306"/>
<dbReference type="PathwayCommons" id="Q96N76"/>
<dbReference type="Reactome" id="R-HSA-70921">
    <property type="pathway name" value="Histidine catabolism"/>
</dbReference>
<dbReference type="SignaLink" id="Q96N76"/>
<dbReference type="UniPathway" id="UPA00379">
    <property type="reaction ID" value="UER00550"/>
</dbReference>
<dbReference type="BioGRID-ORCS" id="131669">
    <property type="hits" value="8 hits in 1141 CRISPR screens"/>
</dbReference>
<dbReference type="GenomeRNAi" id="131669"/>
<dbReference type="Pharos" id="Q96N76">
    <property type="development level" value="Tbio"/>
</dbReference>
<dbReference type="PRO" id="PR:Q96N76"/>
<dbReference type="Proteomes" id="UP000005640">
    <property type="component" value="Chromosome 3"/>
</dbReference>
<dbReference type="RNAct" id="Q96N76">
    <property type="molecule type" value="protein"/>
</dbReference>
<dbReference type="Bgee" id="ENSG00000159650">
    <property type="expression patterns" value="Expressed in right lobe of liver and 34 other cell types or tissues"/>
</dbReference>
<dbReference type="GO" id="GO:0005829">
    <property type="term" value="C:cytosol"/>
    <property type="evidence" value="ECO:0000314"/>
    <property type="project" value="BHF-UCL"/>
</dbReference>
<dbReference type="GO" id="GO:0016153">
    <property type="term" value="F:urocanate hydratase activity"/>
    <property type="evidence" value="ECO:0000314"/>
    <property type="project" value="BHF-UCL"/>
</dbReference>
<dbReference type="GO" id="GO:0006548">
    <property type="term" value="P:L-histidine catabolic process"/>
    <property type="evidence" value="ECO:0000315"/>
    <property type="project" value="BHF-UCL"/>
</dbReference>
<dbReference type="GO" id="GO:0019556">
    <property type="term" value="P:L-histidine catabolic process to glutamate and formamide"/>
    <property type="evidence" value="ECO:0007669"/>
    <property type="project" value="UniProtKB-UniPathway"/>
</dbReference>
<dbReference type="GO" id="GO:0019557">
    <property type="term" value="P:L-histidine catabolic process to glutamate and formate"/>
    <property type="evidence" value="ECO:0007669"/>
    <property type="project" value="UniProtKB-UniPathway"/>
</dbReference>
<dbReference type="FunFam" id="3.40.1770.10:FF:000002">
    <property type="entry name" value="Urocanate hydratase 1"/>
    <property type="match status" value="1"/>
</dbReference>
<dbReference type="FunFam" id="3.40.1770.10:FF:000003">
    <property type="entry name" value="Urocanate hydratase 1"/>
    <property type="match status" value="1"/>
</dbReference>
<dbReference type="FunFam" id="3.40.50.10730:FF:000002">
    <property type="entry name" value="Urocanate hydratase 1"/>
    <property type="match status" value="1"/>
</dbReference>
<dbReference type="Gene3D" id="3.40.50.10730">
    <property type="entry name" value="Urocanase like domains"/>
    <property type="match status" value="1"/>
</dbReference>
<dbReference type="Gene3D" id="3.40.1770.10">
    <property type="entry name" value="Urocanase superfamily"/>
    <property type="match status" value="2"/>
</dbReference>
<dbReference type="HAMAP" id="MF_00577">
    <property type="entry name" value="HutU"/>
    <property type="match status" value="1"/>
</dbReference>
<dbReference type="InterPro" id="IPR055351">
    <property type="entry name" value="Urocanase"/>
</dbReference>
<dbReference type="InterPro" id="IPR023637">
    <property type="entry name" value="Urocanase-like"/>
</dbReference>
<dbReference type="InterPro" id="IPR035401">
    <property type="entry name" value="Urocanase_C"/>
</dbReference>
<dbReference type="InterPro" id="IPR038364">
    <property type="entry name" value="Urocanase_central_sf"/>
</dbReference>
<dbReference type="InterPro" id="IPR023636">
    <property type="entry name" value="Urocanase_CS"/>
</dbReference>
<dbReference type="InterPro" id="IPR035400">
    <property type="entry name" value="Urocanase_N"/>
</dbReference>
<dbReference type="InterPro" id="IPR035085">
    <property type="entry name" value="Urocanase_Rossmann-like"/>
</dbReference>
<dbReference type="InterPro" id="IPR036190">
    <property type="entry name" value="Urocanase_sf"/>
</dbReference>
<dbReference type="NCBIfam" id="NF003820">
    <property type="entry name" value="PRK05414.1"/>
    <property type="match status" value="1"/>
</dbReference>
<dbReference type="PANTHER" id="PTHR12216">
    <property type="entry name" value="UROCANATE HYDRATASE"/>
    <property type="match status" value="1"/>
</dbReference>
<dbReference type="PANTHER" id="PTHR12216:SF3">
    <property type="entry name" value="UROCANATE HYDRATASE"/>
    <property type="match status" value="1"/>
</dbReference>
<dbReference type="Pfam" id="PF01175">
    <property type="entry name" value="Urocanase"/>
    <property type="match status" value="1"/>
</dbReference>
<dbReference type="Pfam" id="PF17392">
    <property type="entry name" value="Urocanase_C"/>
    <property type="match status" value="1"/>
</dbReference>
<dbReference type="Pfam" id="PF17391">
    <property type="entry name" value="Urocanase_N"/>
    <property type="match status" value="1"/>
</dbReference>
<dbReference type="PIRSF" id="PIRSF001423">
    <property type="entry name" value="Urocanate_hydrat"/>
    <property type="match status" value="1"/>
</dbReference>
<dbReference type="SUPFAM" id="SSF111326">
    <property type="entry name" value="Urocanase"/>
    <property type="match status" value="1"/>
</dbReference>
<dbReference type="PROSITE" id="PS01233">
    <property type="entry name" value="UROCANASE"/>
    <property type="match status" value="1"/>
</dbReference>
<keyword id="KW-0025">Alternative splicing</keyword>
<keyword id="KW-0225">Disease variant</keyword>
<keyword id="KW-0369">Histidine metabolism</keyword>
<keyword id="KW-0456">Lyase</keyword>
<keyword id="KW-0520">NAD</keyword>
<keyword id="KW-1267">Proteomics identification</keyword>
<keyword id="KW-1185">Reference proteome</keyword>